<organism>
    <name type="scientific">Mus musculus</name>
    <name type="common">Mouse</name>
    <dbReference type="NCBI Taxonomy" id="10090"/>
    <lineage>
        <taxon>Eukaryota</taxon>
        <taxon>Metazoa</taxon>
        <taxon>Chordata</taxon>
        <taxon>Craniata</taxon>
        <taxon>Vertebrata</taxon>
        <taxon>Euteleostomi</taxon>
        <taxon>Mammalia</taxon>
        <taxon>Eutheria</taxon>
        <taxon>Euarchontoglires</taxon>
        <taxon>Glires</taxon>
        <taxon>Rodentia</taxon>
        <taxon>Myomorpha</taxon>
        <taxon>Muroidea</taxon>
        <taxon>Muridae</taxon>
        <taxon>Murinae</taxon>
        <taxon>Mus</taxon>
        <taxon>Mus</taxon>
    </lineage>
</organism>
<comment type="cofactor">
    <cofactor evidence="2">
        <name>Fe(2+)</name>
        <dbReference type="ChEBI" id="CHEBI:29033"/>
    </cofactor>
    <text evidence="2">Binds 1 Fe(2+) ion per subunit.</text>
</comment>
<comment type="cofactor">
    <cofactor evidence="1">
        <name>L-ascorbate</name>
        <dbReference type="ChEBI" id="CHEBI:38290"/>
    </cofactor>
</comment>
<comment type="similarity">
    <text evidence="3">Belongs to the OGFOD2 family.</text>
</comment>
<comment type="sequence caution" evidence="3">
    <conflict type="erroneous initiation">
        <sequence resource="EMBL-CDS" id="AAH22762"/>
    </conflict>
</comment>
<comment type="sequence caution" evidence="3">
    <conflict type="frameshift">
        <sequence resource="EMBL-CDS" id="BAC25517"/>
    </conflict>
</comment>
<name>OGFD2_MOUSE</name>
<gene>
    <name type="primary">Ogfod2</name>
</gene>
<reference key="1">
    <citation type="journal article" date="2005" name="Science">
        <title>The transcriptional landscape of the mammalian genome.</title>
        <authorList>
            <person name="Carninci P."/>
            <person name="Kasukawa T."/>
            <person name="Katayama S."/>
            <person name="Gough J."/>
            <person name="Frith M.C."/>
            <person name="Maeda N."/>
            <person name="Oyama R."/>
            <person name="Ravasi T."/>
            <person name="Lenhard B."/>
            <person name="Wells C."/>
            <person name="Kodzius R."/>
            <person name="Shimokawa K."/>
            <person name="Bajic V.B."/>
            <person name="Brenner S.E."/>
            <person name="Batalov S."/>
            <person name="Forrest A.R."/>
            <person name="Zavolan M."/>
            <person name="Davis M.J."/>
            <person name="Wilming L.G."/>
            <person name="Aidinis V."/>
            <person name="Allen J.E."/>
            <person name="Ambesi-Impiombato A."/>
            <person name="Apweiler R."/>
            <person name="Aturaliya R.N."/>
            <person name="Bailey T.L."/>
            <person name="Bansal M."/>
            <person name="Baxter L."/>
            <person name="Beisel K.W."/>
            <person name="Bersano T."/>
            <person name="Bono H."/>
            <person name="Chalk A.M."/>
            <person name="Chiu K.P."/>
            <person name="Choudhary V."/>
            <person name="Christoffels A."/>
            <person name="Clutterbuck D.R."/>
            <person name="Crowe M.L."/>
            <person name="Dalla E."/>
            <person name="Dalrymple B.P."/>
            <person name="de Bono B."/>
            <person name="Della Gatta G."/>
            <person name="di Bernardo D."/>
            <person name="Down T."/>
            <person name="Engstrom P."/>
            <person name="Fagiolini M."/>
            <person name="Faulkner G."/>
            <person name="Fletcher C.F."/>
            <person name="Fukushima T."/>
            <person name="Furuno M."/>
            <person name="Futaki S."/>
            <person name="Gariboldi M."/>
            <person name="Georgii-Hemming P."/>
            <person name="Gingeras T.R."/>
            <person name="Gojobori T."/>
            <person name="Green R.E."/>
            <person name="Gustincich S."/>
            <person name="Harbers M."/>
            <person name="Hayashi Y."/>
            <person name="Hensch T.K."/>
            <person name="Hirokawa N."/>
            <person name="Hill D."/>
            <person name="Huminiecki L."/>
            <person name="Iacono M."/>
            <person name="Ikeo K."/>
            <person name="Iwama A."/>
            <person name="Ishikawa T."/>
            <person name="Jakt M."/>
            <person name="Kanapin A."/>
            <person name="Katoh M."/>
            <person name="Kawasawa Y."/>
            <person name="Kelso J."/>
            <person name="Kitamura H."/>
            <person name="Kitano H."/>
            <person name="Kollias G."/>
            <person name="Krishnan S.P."/>
            <person name="Kruger A."/>
            <person name="Kummerfeld S.K."/>
            <person name="Kurochkin I.V."/>
            <person name="Lareau L.F."/>
            <person name="Lazarevic D."/>
            <person name="Lipovich L."/>
            <person name="Liu J."/>
            <person name="Liuni S."/>
            <person name="McWilliam S."/>
            <person name="Madan Babu M."/>
            <person name="Madera M."/>
            <person name="Marchionni L."/>
            <person name="Matsuda H."/>
            <person name="Matsuzawa S."/>
            <person name="Miki H."/>
            <person name="Mignone F."/>
            <person name="Miyake S."/>
            <person name="Morris K."/>
            <person name="Mottagui-Tabar S."/>
            <person name="Mulder N."/>
            <person name="Nakano N."/>
            <person name="Nakauchi H."/>
            <person name="Ng P."/>
            <person name="Nilsson R."/>
            <person name="Nishiguchi S."/>
            <person name="Nishikawa S."/>
            <person name="Nori F."/>
            <person name="Ohara O."/>
            <person name="Okazaki Y."/>
            <person name="Orlando V."/>
            <person name="Pang K.C."/>
            <person name="Pavan W.J."/>
            <person name="Pavesi G."/>
            <person name="Pesole G."/>
            <person name="Petrovsky N."/>
            <person name="Piazza S."/>
            <person name="Reed J."/>
            <person name="Reid J.F."/>
            <person name="Ring B.Z."/>
            <person name="Ringwald M."/>
            <person name="Rost B."/>
            <person name="Ruan Y."/>
            <person name="Salzberg S.L."/>
            <person name="Sandelin A."/>
            <person name="Schneider C."/>
            <person name="Schoenbach C."/>
            <person name="Sekiguchi K."/>
            <person name="Semple C.A."/>
            <person name="Seno S."/>
            <person name="Sessa L."/>
            <person name="Sheng Y."/>
            <person name="Shibata Y."/>
            <person name="Shimada H."/>
            <person name="Shimada K."/>
            <person name="Silva D."/>
            <person name="Sinclair B."/>
            <person name="Sperling S."/>
            <person name="Stupka E."/>
            <person name="Sugiura K."/>
            <person name="Sultana R."/>
            <person name="Takenaka Y."/>
            <person name="Taki K."/>
            <person name="Tammoja K."/>
            <person name="Tan S.L."/>
            <person name="Tang S."/>
            <person name="Taylor M.S."/>
            <person name="Tegner J."/>
            <person name="Teichmann S.A."/>
            <person name="Ueda H.R."/>
            <person name="van Nimwegen E."/>
            <person name="Verardo R."/>
            <person name="Wei C.L."/>
            <person name="Yagi K."/>
            <person name="Yamanishi H."/>
            <person name="Zabarovsky E."/>
            <person name="Zhu S."/>
            <person name="Zimmer A."/>
            <person name="Hide W."/>
            <person name="Bult C."/>
            <person name="Grimmond S.M."/>
            <person name="Teasdale R.D."/>
            <person name="Liu E.T."/>
            <person name="Brusic V."/>
            <person name="Quackenbush J."/>
            <person name="Wahlestedt C."/>
            <person name="Mattick J.S."/>
            <person name="Hume D.A."/>
            <person name="Kai C."/>
            <person name="Sasaki D."/>
            <person name="Tomaru Y."/>
            <person name="Fukuda S."/>
            <person name="Kanamori-Katayama M."/>
            <person name="Suzuki M."/>
            <person name="Aoki J."/>
            <person name="Arakawa T."/>
            <person name="Iida J."/>
            <person name="Imamura K."/>
            <person name="Itoh M."/>
            <person name="Kato T."/>
            <person name="Kawaji H."/>
            <person name="Kawagashira N."/>
            <person name="Kawashima T."/>
            <person name="Kojima M."/>
            <person name="Kondo S."/>
            <person name="Konno H."/>
            <person name="Nakano K."/>
            <person name="Ninomiya N."/>
            <person name="Nishio T."/>
            <person name="Okada M."/>
            <person name="Plessy C."/>
            <person name="Shibata K."/>
            <person name="Shiraki T."/>
            <person name="Suzuki S."/>
            <person name="Tagami M."/>
            <person name="Waki K."/>
            <person name="Watahiki A."/>
            <person name="Okamura-Oho Y."/>
            <person name="Suzuki H."/>
            <person name="Kawai J."/>
            <person name="Hayashizaki Y."/>
        </authorList>
    </citation>
    <scope>NUCLEOTIDE SEQUENCE [LARGE SCALE MRNA]</scope>
    <source>
        <strain>C57BL/6J</strain>
        <tissue>Colon</tissue>
        <tissue>Embryo</tissue>
        <tissue>Liver</tissue>
    </source>
</reference>
<reference key="2">
    <citation type="journal article" date="2004" name="Genome Res.">
        <title>The status, quality, and expansion of the NIH full-length cDNA project: the Mammalian Gene Collection (MGC).</title>
        <authorList>
            <consortium name="The MGC Project Team"/>
        </authorList>
    </citation>
    <scope>NUCLEOTIDE SEQUENCE [LARGE SCALE MRNA]</scope>
    <source>
        <strain>FVB/N</strain>
        <tissue>Colon</tissue>
        <tissue>Salivary gland</tissue>
    </source>
</reference>
<keyword id="KW-0223">Dioxygenase</keyword>
<keyword id="KW-0408">Iron</keyword>
<keyword id="KW-0479">Metal-binding</keyword>
<keyword id="KW-0560">Oxidoreductase</keyword>
<keyword id="KW-1185">Reference proteome</keyword>
<keyword id="KW-0847">Vitamin C</keyword>
<accession>Q9CQ04</accession>
<accession>Q78IV7</accession>
<accession>Q8BMW3</accession>
<evidence type="ECO:0000250" key="1"/>
<evidence type="ECO:0000255" key="2">
    <source>
        <dbReference type="PROSITE-ProRule" id="PRU00805"/>
    </source>
</evidence>
<evidence type="ECO:0000305" key="3"/>
<dbReference type="EC" id="1.14.11.-"/>
<dbReference type="EMBL" id="AK004943">
    <property type="protein sequence ID" value="BAB23687.1"/>
    <property type="molecule type" value="mRNA"/>
</dbReference>
<dbReference type="EMBL" id="AK017497">
    <property type="protein sequence ID" value="BAC25517.1"/>
    <property type="status" value="ALT_FRAME"/>
    <property type="molecule type" value="mRNA"/>
</dbReference>
<dbReference type="EMBL" id="AK018534">
    <property type="protein sequence ID" value="BAB31259.1"/>
    <property type="molecule type" value="mRNA"/>
</dbReference>
<dbReference type="EMBL" id="BC022762">
    <property type="protein sequence ID" value="AAH22762.1"/>
    <property type="status" value="ALT_INIT"/>
    <property type="molecule type" value="mRNA"/>
</dbReference>
<dbReference type="EMBL" id="BC069872">
    <property type="protein sequence ID" value="AAH69872.1"/>
    <property type="molecule type" value="mRNA"/>
</dbReference>
<dbReference type="CCDS" id="CCDS19672.1"/>
<dbReference type="RefSeq" id="NP_079947.1">
    <property type="nucleotide sequence ID" value="NM_025671.4"/>
</dbReference>
<dbReference type="SMR" id="Q9CQ04"/>
<dbReference type="FunCoup" id="Q9CQ04">
    <property type="interactions" value="16"/>
</dbReference>
<dbReference type="STRING" id="10090.ENSMUSP00000024470"/>
<dbReference type="PhosphoSitePlus" id="Q9CQ04"/>
<dbReference type="PaxDb" id="10090-ENSMUSP00000024470"/>
<dbReference type="ProteomicsDB" id="294166"/>
<dbReference type="Antibodypedia" id="31731">
    <property type="antibodies" value="123 antibodies from 27 providers"/>
</dbReference>
<dbReference type="Ensembl" id="ENSMUST00000024470.13">
    <property type="protein sequence ID" value="ENSMUSP00000024470.7"/>
    <property type="gene ID" value="ENSMUSG00000023707.14"/>
</dbReference>
<dbReference type="GeneID" id="66627"/>
<dbReference type="KEGG" id="mmu:66627"/>
<dbReference type="UCSC" id="uc008zox.1">
    <property type="organism name" value="mouse"/>
</dbReference>
<dbReference type="AGR" id="MGI:1913877"/>
<dbReference type="CTD" id="79676"/>
<dbReference type="MGI" id="MGI:1913877">
    <property type="gene designation" value="Ogfod2"/>
</dbReference>
<dbReference type="VEuPathDB" id="HostDB:ENSMUSG00000023707"/>
<dbReference type="eggNOG" id="KOG1971">
    <property type="taxonomic scope" value="Eukaryota"/>
</dbReference>
<dbReference type="GeneTree" id="ENSGT00940000153974"/>
<dbReference type="HOGENOM" id="CLU_045835_1_0_1"/>
<dbReference type="InParanoid" id="Q9CQ04"/>
<dbReference type="OMA" id="CQAFVDE"/>
<dbReference type="OrthoDB" id="1736837at2759"/>
<dbReference type="PhylomeDB" id="Q9CQ04"/>
<dbReference type="TreeFam" id="TF329650"/>
<dbReference type="BioGRID-ORCS" id="66627">
    <property type="hits" value="4 hits in 78 CRISPR screens"/>
</dbReference>
<dbReference type="PRO" id="PR:Q9CQ04"/>
<dbReference type="Proteomes" id="UP000000589">
    <property type="component" value="Chromosome 5"/>
</dbReference>
<dbReference type="RNAct" id="Q9CQ04">
    <property type="molecule type" value="protein"/>
</dbReference>
<dbReference type="Bgee" id="ENSMUSG00000023707">
    <property type="expression patterns" value="Expressed in spermatocyte and 226 other cell types or tissues"/>
</dbReference>
<dbReference type="ExpressionAtlas" id="Q9CQ04">
    <property type="expression patterns" value="baseline and differential"/>
</dbReference>
<dbReference type="GO" id="GO:0051213">
    <property type="term" value="F:dioxygenase activity"/>
    <property type="evidence" value="ECO:0007669"/>
    <property type="project" value="UniProtKB-KW"/>
</dbReference>
<dbReference type="GO" id="GO:0005506">
    <property type="term" value="F:iron ion binding"/>
    <property type="evidence" value="ECO:0007669"/>
    <property type="project" value="InterPro"/>
</dbReference>
<dbReference type="GO" id="GO:0031418">
    <property type="term" value="F:L-ascorbic acid binding"/>
    <property type="evidence" value="ECO:0007669"/>
    <property type="project" value="UniProtKB-KW"/>
</dbReference>
<dbReference type="GO" id="GO:0016705">
    <property type="term" value="F:oxidoreductase activity, acting on paired donors, with incorporation or reduction of molecular oxygen"/>
    <property type="evidence" value="ECO:0007669"/>
    <property type="project" value="InterPro"/>
</dbReference>
<dbReference type="Gene3D" id="2.60.120.620">
    <property type="entry name" value="q2cbj1_9rhob like domain"/>
    <property type="match status" value="1"/>
</dbReference>
<dbReference type="InterPro" id="IPR005123">
    <property type="entry name" value="Oxoglu/Fe-dep_dioxygenase_dom"/>
</dbReference>
<dbReference type="InterPro" id="IPR006620">
    <property type="entry name" value="Pro_4_hyd_alph"/>
</dbReference>
<dbReference type="PANTHER" id="PTHR24014">
    <property type="entry name" value="2-OXOGLUTARATE AND IRON-DEPENDENT OXYGENASE DOMAIN-CONTAINING PROTEIN 2"/>
    <property type="match status" value="1"/>
</dbReference>
<dbReference type="PANTHER" id="PTHR24014:SF4">
    <property type="entry name" value="2-OXOGLUTARATE AND IRON-DEPENDENT OXYGENASE DOMAIN-CONTAINING PROTEIN 2"/>
    <property type="match status" value="1"/>
</dbReference>
<dbReference type="Pfam" id="PF25238">
    <property type="entry name" value="OGFOD2-like"/>
    <property type="match status" value="1"/>
</dbReference>
<dbReference type="SMART" id="SM00702">
    <property type="entry name" value="P4Hc"/>
    <property type="match status" value="1"/>
</dbReference>
<dbReference type="PROSITE" id="PS51471">
    <property type="entry name" value="FE2OG_OXY"/>
    <property type="match status" value="1"/>
</dbReference>
<protein>
    <recommendedName>
        <fullName>2-oxoglutarate and iron-dependent oxygenase domain-containing protein 2</fullName>
        <ecNumber>1.14.11.-</ecNumber>
    </recommendedName>
</protein>
<sequence>MATAAQRRFCRCACFCSQNLYVARYGLHLRFRDEHQLRRDYGQLLRSRGCVTSKDFQQLLEELEQEVGRRRRLGQESAVRKALIASSYHPARPEVYSSLQDAALAPEFMAAAEYSTSPGADLEGLLQRLETVSEEKRIYRVPVFSAKFCQTLLEELEHFEQSDMPKGRPNTMNNHGVLMYELGLDDPLVTPLRERFLLPLMALLYPDYGGGYLDSHRAFVVKYALGQDLDLGCHYDNAELTLNVALGKDFTGGALYFGGLFQAPAALKETLEVEHVVGSGILHRGGQLHGARPLCKGERWNLVVWLRASAVRNRLCPMCCQKPELVDDEGFGDGFTREEPTTVDVCVLT</sequence>
<feature type="chain" id="PRO_0000288979" description="2-oxoglutarate and iron-dependent oxygenase domain-containing protein 2">
    <location>
        <begin position="1"/>
        <end position="349"/>
    </location>
</feature>
<feature type="domain" description="Fe2OG dioxygenase" evidence="2">
    <location>
        <begin position="214"/>
        <end position="308"/>
    </location>
</feature>
<feature type="binding site" evidence="2">
    <location>
        <position position="234"/>
    </location>
    <ligand>
        <name>Fe cation</name>
        <dbReference type="ChEBI" id="CHEBI:24875"/>
    </ligand>
</feature>
<feature type="binding site" evidence="2">
    <location>
        <position position="236"/>
    </location>
    <ligand>
        <name>Fe cation</name>
        <dbReference type="ChEBI" id="CHEBI:24875"/>
    </ligand>
</feature>
<feature type="binding site" evidence="2">
    <location>
        <position position="289"/>
    </location>
    <ligand>
        <name>Fe cation</name>
        <dbReference type="ChEBI" id="CHEBI:24875"/>
    </ligand>
</feature>
<feature type="binding site" evidence="2">
    <location>
        <position position="299"/>
    </location>
    <ligand>
        <name>2-oxoglutarate</name>
        <dbReference type="ChEBI" id="CHEBI:16810"/>
    </ligand>
</feature>
<feature type="sequence conflict" description="In Ref. 1; BAC25517." evidence="3" ref="1">
    <original>R</original>
    <variation>G</variation>
    <location>
        <position position="8"/>
    </location>
</feature>
<feature type="sequence conflict" description="In Ref. 1; BAC25517." evidence="3" ref="1">
    <original>S</original>
    <variation>T</variation>
    <location>
        <position position="47"/>
    </location>
</feature>
<feature type="sequence conflict" description="In Ref. 1; BAC25517." evidence="3" ref="1">
    <original>RL</original>
    <variation>SV</variation>
    <location>
        <begin position="72"/>
        <end position="73"/>
    </location>
</feature>
<proteinExistence type="evidence at transcript level"/>